<dbReference type="EMBL" id="U17243">
    <property type="protein sequence ID" value="AAB67327.1"/>
    <property type="molecule type" value="Genomic_DNA"/>
</dbReference>
<dbReference type="EMBL" id="AY557931">
    <property type="protein sequence ID" value="AAS56257.1"/>
    <property type="molecule type" value="Genomic_DNA"/>
</dbReference>
<dbReference type="EMBL" id="BK006945">
    <property type="protein sequence ID" value="DAA09592.1"/>
    <property type="molecule type" value="Genomic_DNA"/>
</dbReference>
<dbReference type="PIR" id="S50367">
    <property type="entry name" value="S50367"/>
</dbReference>
<dbReference type="SMR" id="Q05863"/>
<dbReference type="BioGRID" id="31547">
    <property type="interactions" value="254"/>
</dbReference>
<dbReference type="DIP" id="DIP-2590N"/>
<dbReference type="FunCoup" id="Q05863">
    <property type="interactions" value="64"/>
</dbReference>
<dbReference type="IntAct" id="Q05863">
    <property type="interactions" value="1"/>
</dbReference>
<dbReference type="STRING" id="4932.YLR281C"/>
<dbReference type="PaxDb" id="4932-YLR281C"/>
<dbReference type="PeptideAtlas" id="Q05863"/>
<dbReference type="EnsemblFungi" id="YLR281C_mRNA">
    <property type="protein sequence ID" value="YLR281C"/>
    <property type="gene ID" value="YLR281C"/>
</dbReference>
<dbReference type="KEGG" id="sce:YLR281C"/>
<dbReference type="AGR" id="SGD:S000004271"/>
<dbReference type="SGD" id="S000004271">
    <property type="gene designation" value="YLR281C"/>
</dbReference>
<dbReference type="VEuPathDB" id="FungiDB:YLR281C"/>
<dbReference type="eggNOG" id="KOG2726">
    <property type="taxonomic scope" value="Eukaryota"/>
</dbReference>
<dbReference type="HOGENOM" id="CLU_089470_4_0_1"/>
<dbReference type="InParanoid" id="Q05863"/>
<dbReference type="OMA" id="ECDNFID"/>
<dbReference type="OrthoDB" id="277888at2759"/>
<dbReference type="BioCyc" id="YEAST:G3O-32378-MONOMER"/>
<dbReference type="BioGRID-ORCS" id="850987">
    <property type="hits" value="7 hits in 10 CRISPR screens"/>
</dbReference>
<dbReference type="PRO" id="PR:Q05863"/>
<dbReference type="Proteomes" id="UP000002311">
    <property type="component" value="Chromosome XII"/>
</dbReference>
<dbReference type="RNAct" id="Q05863">
    <property type="molecule type" value="protein"/>
</dbReference>
<dbReference type="GO" id="GO:0005739">
    <property type="term" value="C:mitochondrion"/>
    <property type="evidence" value="ECO:0000314"/>
    <property type="project" value="SGD"/>
</dbReference>
<dbReference type="GO" id="GO:0004045">
    <property type="term" value="F:peptidyl-tRNA hydrolase activity"/>
    <property type="evidence" value="ECO:0000314"/>
    <property type="project" value="SGD"/>
</dbReference>
<dbReference type="GO" id="GO:0003747">
    <property type="term" value="F:translation release factor activity"/>
    <property type="evidence" value="ECO:0007669"/>
    <property type="project" value="InterPro"/>
</dbReference>
<dbReference type="GO" id="GO:0032543">
    <property type="term" value="P:mitochondrial translation"/>
    <property type="evidence" value="ECO:0000315"/>
    <property type="project" value="SGD"/>
</dbReference>
<dbReference type="FunFam" id="3.30.160.20:FF:000065">
    <property type="entry name" value="Peptidyl-tRNA hydrolase domain protein"/>
    <property type="match status" value="1"/>
</dbReference>
<dbReference type="Gene3D" id="3.30.160.20">
    <property type="match status" value="1"/>
</dbReference>
<dbReference type="InterPro" id="IPR052405">
    <property type="entry name" value="Mito_Transl_Release_Factor"/>
</dbReference>
<dbReference type="InterPro" id="IPR000352">
    <property type="entry name" value="Pep_chain_release_fac_I"/>
</dbReference>
<dbReference type="InterPro" id="IPR045853">
    <property type="entry name" value="Pep_chain_release_fac_I_sf"/>
</dbReference>
<dbReference type="PANTHER" id="PTHR46203:SF1">
    <property type="entry name" value="MITOCHONDRIAL TRANSLATION RELEASE FACTOR IN RESCUE"/>
    <property type="match status" value="1"/>
</dbReference>
<dbReference type="PANTHER" id="PTHR46203">
    <property type="entry name" value="PROBABLE PEPTIDE CHAIN RELEASE FACTOR C12ORF65"/>
    <property type="match status" value="1"/>
</dbReference>
<dbReference type="Pfam" id="PF00472">
    <property type="entry name" value="RF-1"/>
    <property type="match status" value="1"/>
</dbReference>
<dbReference type="SUPFAM" id="SSF75620">
    <property type="entry name" value="Release factor"/>
    <property type="match status" value="1"/>
</dbReference>
<protein>
    <recommendedName>
        <fullName>Uncharacterized peptide chain release factor-like protein YLR281C, mitochondrial</fullName>
    </recommendedName>
</protein>
<comment type="subcellular location">
    <subcellularLocation>
        <location evidence="3">Mitochondrion</location>
    </subcellularLocation>
</comment>
<comment type="similarity">
    <text evidence="4">Belongs to the prokaryotic/mitochondrial release factor family.</text>
</comment>
<feature type="transit peptide" description="Mitochondrion" evidence="1">
    <location>
        <begin position="1"/>
        <end position="17"/>
    </location>
</feature>
<feature type="chain" id="PRO_0000247341" description="Uncharacterized peptide chain release factor-like protein YLR281C, mitochondrial">
    <location>
        <begin position="18"/>
        <end position="155"/>
    </location>
</feature>
<feature type="region of interest" description="Disordered" evidence="2">
    <location>
        <begin position="111"/>
        <end position="155"/>
    </location>
</feature>
<feature type="compositionally biased region" description="Basic residues" evidence="2">
    <location>
        <begin position="113"/>
        <end position="124"/>
    </location>
</feature>
<feature type="compositionally biased region" description="Basic and acidic residues" evidence="2">
    <location>
        <begin position="125"/>
        <end position="155"/>
    </location>
</feature>
<organism>
    <name type="scientific">Saccharomyces cerevisiae (strain ATCC 204508 / S288c)</name>
    <name type="common">Baker's yeast</name>
    <dbReference type="NCBI Taxonomy" id="559292"/>
    <lineage>
        <taxon>Eukaryota</taxon>
        <taxon>Fungi</taxon>
        <taxon>Dikarya</taxon>
        <taxon>Ascomycota</taxon>
        <taxon>Saccharomycotina</taxon>
        <taxon>Saccharomycetes</taxon>
        <taxon>Saccharomycetales</taxon>
        <taxon>Saccharomycetaceae</taxon>
        <taxon>Saccharomyces</taxon>
    </lineage>
</organism>
<keyword id="KW-0496">Mitochondrion</keyword>
<keyword id="KW-1185">Reference proteome</keyword>
<keyword id="KW-0809">Transit peptide</keyword>
<name>YL281_YEAST</name>
<sequence>MMRGASKRSISSAAVLLIKKNKLPPRPKFTPEMEAQCTEKFLHGGRGPGGQKINKCNSKVQLRHEPTGIVVECQETRSREQNRKLARLKLARELAASYDTMPSREEALLQWHRQQKRSQRRRSVAKYEQREEAARVEKEEREARDREMVRELFRR</sequence>
<gene>
    <name type="ordered locus">YLR281C</name>
</gene>
<proteinExistence type="evidence at protein level"/>
<evidence type="ECO:0000255" key="1"/>
<evidence type="ECO:0000256" key="2">
    <source>
        <dbReference type="SAM" id="MobiDB-lite"/>
    </source>
</evidence>
<evidence type="ECO:0000269" key="3">
    <source>
    </source>
</evidence>
<evidence type="ECO:0000305" key="4"/>
<reference key="1">
    <citation type="journal article" date="1997" name="Nature">
        <title>The nucleotide sequence of Saccharomyces cerevisiae chromosome XII.</title>
        <authorList>
            <person name="Johnston M."/>
            <person name="Hillier L.W."/>
            <person name="Riles L."/>
            <person name="Albermann K."/>
            <person name="Andre B."/>
            <person name="Ansorge W."/>
            <person name="Benes V."/>
            <person name="Brueckner M."/>
            <person name="Delius H."/>
            <person name="Dubois E."/>
            <person name="Duesterhoeft A."/>
            <person name="Entian K.-D."/>
            <person name="Floeth M."/>
            <person name="Goffeau A."/>
            <person name="Hebling U."/>
            <person name="Heumann K."/>
            <person name="Heuss-Neitzel D."/>
            <person name="Hilbert H."/>
            <person name="Hilger F."/>
            <person name="Kleine K."/>
            <person name="Koetter P."/>
            <person name="Louis E.J."/>
            <person name="Messenguy F."/>
            <person name="Mewes H.-W."/>
            <person name="Miosga T."/>
            <person name="Moestl D."/>
            <person name="Mueller-Auer S."/>
            <person name="Nentwich U."/>
            <person name="Obermaier B."/>
            <person name="Piravandi E."/>
            <person name="Pohl T.M."/>
            <person name="Portetelle D."/>
            <person name="Purnelle B."/>
            <person name="Rechmann S."/>
            <person name="Rieger M."/>
            <person name="Rinke M."/>
            <person name="Rose M."/>
            <person name="Scharfe M."/>
            <person name="Scherens B."/>
            <person name="Scholler P."/>
            <person name="Schwager C."/>
            <person name="Schwarz S."/>
            <person name="Underwood A.P."/>
            <person name="Urrestarazu L.A."/>
            <person name="Vandenbol M."/>
            <person name="Verhasselt P."/>
            <person name="Vierendeels F."/>
            <person name="Voet M."/>
            <person name="Volckaert G."/>
            <person name="Voss H."/>
            <person name="Wambutt R."/>
            <person name="Wedler E."/>
            <person name="Wedler H."/>
            <person name="Zimmermann F.K."/>
            <person name="Zollner A."/>
            <person name="Hani J."/>
            <person name="Hoheisel J.D."/>
        </authorList>
    </citation>
    <scope>NUCLEOTIDE SEQUENCE [LARGE SCALE GENOMIC DNA]</scope>
    <source>
        <strain>ATCC 204508 / S288c</strain>
    </source>
</reference>
<reference key="2">
    <citation type="journal article" date="2014" name="G3 (Bethesda)">
        <title>The reference genome sequence of Saccharomyces cerevisiae: Then and now.</title>
        <authorList>
            <person name="Engel S.R."/>
            <person name="Dietrich F.S."/>
            <person name="Fisk D.G."/>
            <person name="Binkley G."/>
            <person name="Balakrishnan R."/>
            <person name="Costanzo M.C."/>
            <person name="Dwight S.S."/>
            <person name="Hitz B.C."/>
            <person name="Karra K."/>
            <person name="Nash R.S."/>
            <person name="Weng S."/>
            <person name="Wong E.D."/>
            <person name="Lloyd P."/>
            <person name="Skrzypek M.S."/>
            <person name="Miyasato S.R."/>
            <person name="Simison M."/>
            <person name="Cherry J.M."/>
        </authorList>
    </citation>
    <scope>GENOME REANNOTATION</scope>
    <source>
        <strain>ATCC 204508 / S288c</strain>
    </source>
</reference>
<reference key="3">
    <citation type="journal article" date="2007" name="Genome Res.">
        <title>Approaching a complete repository of sequence-verified protein-encoding clones for Saccharomyces cerevisiae.</title>
        <authorList>
            <person name="Hu Y."/>
            <person name="Rolfs A."/>
            <person name="Bhullar B."/>
            <person name="Murthy T.V.S."/>
            <person name="Zhu C."/>
            <person name="Berger M.F."/>
            <person name="Camargo A.A."/>
            <person name="Kelley F."/>
            <person name="McCarron S."/>
            <person name="Jepson D."/>
            <person name="Richardson A."/>
            <person name="Raphael J."/>
            <person name="Moreira D."/>
            <person name="Taycher E."/>
            <person name="Zuo D."/>
            <person name="Mohr S."/>
            <person name="Kane M.F."/>
            <person name="Williamson J."/>
            <person name="Simpson A.J.G."/>
            <person name="Bulyk M.L."/>
            <person name="Harlow E."/>
            <person name="Marsischky G."/>
            <person name="Kolodner R.D."/>
            <person name="LaBaer J."/>
        </authorList>
    </citation>
    <scope>NUCLEOTIDE SEQUENCE [GENOMIC DNA]</scope>
    <source>
        <strain>ATCC 204508 / S288c</strain>
    </source>
</reference>
<reference key="4">
    <citation type="journal article" date="2003" name="Nature">
        <title>Global analysis of protein localization in budding yeast.</title>
        <authorList>
            <person name="Huh W.-K."/>
            <person name="Falvo J.V."/>
            <person name="Gerke L.C."/>
            <person name="Carroll A.S."/>
            <person name="Howson R.W."/>
            <person name="Weissman J.S."/>
            <person name="O'Shea E.K."/>
        </authorList>
    </citation>
    <scope>SUBCELLULAR LOCATION [LARGE SCALE ANALYSIS]</scope>
</reference>
<accession>Q05863</accession>
<accession>D6VYS6</accession>